<gene>
    <name evidence="1" type="primary">psb28</name>
    <name type="ordered locus">P9301_09331</name>
</gene>
<keyword id="KW-0472">Membrane</keyword>
<keyword id="KW-0602">Photosynthesis</keyword>
<keyword id="KW-0604">Photosystem II</keyword>
<keyword id="KW-1185">Reference proteome</keyword>
<keyword id="KW-0793">Thylakoid</keyword>
<accession>A3PCT1</accession>
<sequence length="117" mass="13284">MTTNKTAKIQFYEGTDEPVVPEIRLTRSKDGTTGQALFLFEKPQALSSITDGEITGMRMIDSEGEILTREVKVKFVDGEPIFLEAVYIWKNTPDFDRFMRFANSYAKSNGLGYSEKK</sequence>
<dbReference type="EMBL" id="CP000576">
    <property type="protein sequence ID" value="ABO17556.1"/>
    <property type="molecule type" value="Genomic_DNA"/>
</dbReference>
<dbReference type="RefSeq" id="WP_011862904.1">
    <property type="nucleotide sequence ID" value="NC_009091.1"/>
</dbReference>
<dbReference type="SMR" id="A3PCT1"/>
<dbReference type="STRING" id="167546.P9301_09331"/>
<dbReference type="KEGG" id="pmg:P9301_09331"/>
<dbReference type="eggNOG" id="ENOG5031GDS">
    <property type="taxonomic scope" value="Bacteria"/>
</dbReference>
<dbReference type="HOGENOM" id="CLU_137323_1_0_3"/>
<dbReference type="OrthoDB" id="559598at2"/>
<dbReference type="Proteomes" id="UP000001430">
    <property type="component" value="Chromosome"/>
</dbReference>
<dbReference type="GO" id="GO:0009654">
    <property type="term" value="C:photosystem II oxygen evolving complex"/>
    <property type="evidence" value="ECO:0007669"/>
    <property type="project" value="InterPro"/>
</dbReference>
<dbReference type="GO" id="GO:0031676">
    <property type="term" value="C:plasma membrane-derived thylakoid membrane"/>
    <property type="evidence" value="ECO:0007669"/>
    <property type="project" value="UniProtKB-SubCell"/>
</dbReference>
<dbReference type="GO" id="GO:0015979">
    <property type="term" value="P:photosynthesis"/>
    <property type="evidence" value="ECO:0007669"/>
    <property type="project" value="UniProtKB-UniRule"/>
</dbReference>
<dbReference type="Gene3D" id="2.40.30.220">
    <property type="entry name" value="Photosystem II Psb28"/>
    <property type="match status" value="1"/>
</dbReference>
<dbReference type="HAMAP" id="MF_01370">
    <property type="entry name" value="PSII_Psb28"/>
    <property type="match status" value="1"/>
</dbReference>
<dbReference type="InterPro" id="IPR038676">
    <property type="entry name" value="Psb28_c1_sf"/>
</dbReference>
<dbReference type="InterPro" id="IPR005610">
    <property type="entry name" value="PSII_Psb28_class-1"/>
</dbReference>
<dbReference type="NCBIfam" id="TIGR03047">
    <property type="entry name" value="PS_II_psb28"/>
    <property type="match status" value="1"/>
</dbReference>
<dbReference type="PANTHER" id="PTHR34963">
    <property type="match status" value="1"/>
</dbReference>
<dbReference type="PANTHER" id="PTHR34963:SF2">
    <property type="entry name" value="PHOTOSYSTEM II REACTION CENTER PSB28 PROTEIN, CHLOROPLASTIC"/>
    <property type="match status" value="1"/>
</dbReference>
<dbReference type="Pfam" id="PF03912">
    <property type="entry name" value="Psb28"/>
    <property type="match status" value="1"/>
</dbReference>
<organism>
    <name type="scientific">Prochlorococcus marinus (strain MIT 9301)</name>
    <dbReference type="NCBI Taxonomy" id="167546"/>
    <lineage>
        <taxon>Bacteria</taxon>
        <taxon>Bacillati</taxon>
        <taxon>Cyanobacteriota</taxon>
        <taxon>Cyanophyceae</taxon>
        <taxon>Synechococcales</taxon>
        <taxon>Prochlorococcaceae</taxon>
        <taxon>Prochlorococcus</taxon>
    </lineage>
</organism>
<feature type="chain" id="PRO_1000068185" description="Photosystem II reaction center Psb28 protein">
    <location>
        <begin position="1"/>
        <end position="117"/>
    </location>
</feature>
<name>PSB28_PROM0</name>
<comment type="subunit">
    <text evidence="1">Part of the photosystem II complex.</text>
</comment>
<comment type="subcellular location">
    <subcellularLocation>
        <location evidence="1">Cellular thylakoid membrane</location>
        <topology evidence="1">Peripheral membrane protein</topology>
        <orientation evidence="1">Cytoplasmic side</orientation>
    </subcellularLocation>
</comment>
<comment type="similarity">
    <text evidence="1">Belongs to the Psb28 family.</text>
</comment>
<reference key="1">
    <citation type="journal article" date="2007" name="PLoS Genet.">
        <title>Patterns and implications of gene gain and loss in the evolution of Prochlorococcus.</title>
        <authorList>
            <person name="Kettler G.C."/>
            <person name="Martiny A.C."/>
            <person name="Huang K."/>
            <person name="Zucker J."/>
            <person name="Coleman M.L."/>
            <person name="Rodrigue S."/>
            <person name="Chen F."/>
            <person name="Lapidus A."/>
            <person name="Ferriera S."/>
            <person name="Johnson J."/>
            <person name="Steglich C."/>
            <person name="Church G.M."/>
            <person name="Richardson P."/>
            <person name="Chisholm S.W."/>
        </authorList>
    </citation>
    <scope>NUCLEOTIDE SEQUENCE [LARGE SCALE GENOMIC DNA]</scope>
    <source>
        <strain>MIT 9301</strain>
    </source>
</reference>
<proteinExistence type="inferred from homology"/>
<evidence type="ECO:0000255" key="1">
    <source>
        <dbReference type="HAMAP-Rule" id="MF_01370"/>
    </source>
</evidence>
<protein>
    <recommendedName>
        <fullName evidence="1">Photosystem II reaction center Psb28 protein</fullName>
    </recommendedName>
    <alternativeName>
        <fullName evidence="1">Photosystem II 13 kDa protein</fullName>
    </alternativeName>
    <alternativeName>
        <fullName evidence="1">Photosystem II reaction center W protein</fullName>
    </alternativeName>
</protein>